<feature type="chain" id="PRO_1000085871" description="HTH-type transcriptional repressor PurR">
    <location>
        <begin position="1"/>
        <end position="336"/>
    </location>
</feature>
<feature type="domain" description="HTH lacI-type" evidence="1">
    <location>
        <begin position="2"/>
        <end position="56"/>
    </location>
</feature>
<feature type="DNA-binding region" description="H-T-H motif" evidence="1">
    <location>
        <begin position="4"/>
        <end position="23"/>
    </location>
</feature>
<feature type="DNA-binding region" evidence="1">
    <location>
        <begin position="48"/>
        <end position="56"/>
    </location>
</feature>
<feature type="binding site" evidence="1">
    <location>
        <position position="73"/>
    </location>
    <ligand>
        <name>hypoxanthine</name>
        <dbReference type="ChEBI" id="CHEBI:17368"/>
    </ligand>
</feature>
<feature type="binding site" evidence="1">
    <location>
        <position position="188"/>
    </location>
    <ligand>
        <name>hypoxanthine</name>
        <dbReference type="ChEBI" id="CHEBI:17368"/>
    </ligand>
</feature>
<feature type="binding site" evidence="1">
    <location>
        <position position="190"/>
    </location>
    <ligand>
        <name>hypoxanthine</name>
        <dbReference type="ChEBI" id="CHEBI:17368"/>
    </ligand>
</feature>
<feature type="binding site" evidence="1">
    <location>
        <position position="219"/>
    </location>
    <ligand>
        <name>hypoxanthine</name>
        <dbReference type="ChEBI" id="CHEBI:17368"/>
    </ligand>
</feature>
<feature type="binding site" evidence="1">
    <location>
        <position position="273"/>
    </location>
    <ligand>
        <name>hypoxanthine</name>
        <dbReference type="ChEBI" id="CHEBI:17368"/>
    </ligand>
</feature>
<dbReference type="EMBL" id="CP000671">
    <property type="protein sequence ID" value="ABQ98530.1"/>
    <property type="molecule type" value="Genomic_DNA"/>
</dbReference>
<dbReference type="SMR" id="A5UCM9"/>
<dbReference type="KEGG" id="hip:CGSHiEE_05845"/>
<dbReference type="HOGENOM" id="CLU_037628_6_1_6"/>
<dbReference type="UniPathway" id="UPA00488"/>
<dbReference type="GO" id="GO:0003700">
    <property type="term" value="F:DNA-binding transcription factor activity"/>
    <property type="evidence" value="ECO:0007669"/>
    <property type="project" value="TreeGrafter"/>
</dbReference>
<dbReference type="GO" id="GO:0000976">
    <property type="term" value="F:transcription cis-regulatory region binding"/>
    <property type="evidence" value="ECO:0007669"/>
    <property type="project" value="TreeGrafter"/>
</dbReference>
<dbReference type="GO" id="GO:0045892">
    <property type="term" value="P:negative regulation of DNA-templated transcription"/>
    <property type="evidence" value="ECO:0007669"/>
    <property type="project" value="UniProtKB-UniRule"/>
</dbReference>
<dbReference type="GO" id="GO:0006164">
    <property type="term" value="P:purine nucleotide biosynthetic process"/>
    <property type="evidence" value="ECO:0007669"/>
    <property type="project" value="UniProtKB-UniPathway"/>
</dbReference>
<dbReference type="CDD" id="cd01392">
    <property type="entry name" value="HTH_LacI"/>
    <property type="match status" value="1"/>
</dbReference>
<dbReference type="CDD" id="cd06275">
    <property type="entry name" value="PBP1_PurR"/>
    <property type="match status" value="1"/>
</dbReference>
<dbReference type="FunFam" id="1.10.260.40:FF:000002">
    <property type="entry name" value="HTH-type transcriptional repressor PurR"/>
    <property type="match status" value="1"/>
</dbReference>
<dbReference type="Gene3D" id="3.40.50.2300">
    <property type="match status" value="2"/>
</dbReference>
<dbReference type="Gene3D" id="1.10.260.40">
    <property type="entry name" value="lambda repressor-like DNA-binding domains"/>
    <property type="match status" value="1"/>
</dbReference>
<dbReference type="HAMAP" id="MF_01277">
    <property type="entry name" value="HTH_type_PurR"/>
    <property type="match status" value="1"/>
</dbReference>
<dbReference type="InterPro" id="IPR000843">
    <property type="entry name" value="HTH_LacI"/>
</dbReference>
<dbReference type="InterPro" id="IPR046335">
    <property type="entry name" value="LacI/GalR-like_sensor"/>
</dbReference>
<dbReference type="InterPro" id="IPR010982">
    <property type="entry name" value="Lambda_DNA-bd_dom_sf"/>
</dbReference>
<dbReference type="InterPro" id="IPR028082">
    <property type="entry name" value="Peripla_BP_I"/>
</dbReference>
<dbReference type="InterPro" id="IPR023588">
    <property type="entry name" value="Tscrpt_reg_HTH_PurR"/>
</dbReference>
<dbReference type="NCBIfam" id="NF007979">
    <property type="entry name" value="PRK10703.1"/>
    <property type="match status" value="1"/>
</dbReference>
<dbReference type="PANTHER" id="PTHR30146:SF148">
    <property type="entry name" value="HTH-TYPE TRANSCRIPTIONAL REPRESSOR PURR-RELATED"/>
    <property type="match status" value="1"/>
</dbReference>
<dbReference type="PANTHER" id="PTHR30146">
    <property type="entry name" value="LACI-RELATED TRANSCRIPTIONAL REPRESSOR"/>
    <property type="match status" value="1"/>
</dbReference>
<dbReference type="Pfam" id="PF00356">
    <property type="entry name" value="LacI"/>
    <property type="match status" value="1"/>
</dbReference>
<dbReference type="Pfam" id="PF13377">
    <property type="entry name" value="Peripla_BP_3"/>
    <property type="match status" value="1"/>
</dbReference>
<dbReference type="PRINTS" id="PR00036">
    <property type="entry name" value="HTHLACI"/>
</dbReference>
<dbReference type="SMART" id="SM00354">
    <property type="entry name" value="HTH_LACI"/>
    <property type="match status" value="1"/>
</dbReference>
<dbReference type="SUPFAM" id="SSF47413">
    <property type="entry name" value="lambda repressor-like DNA-binding domains"/>
    <property type="match status" value="1"/>
</dbReference>
<dbReference type="SUPFAM" id="SSF53822">
    <property type="entry name" value="Periplasmic binding protein-like I"/>
    <property type="match status" value="1"/>
</dbReference>
<dbReference type="PROSITE" id="PS00356">
    <property type="entry name" value="HTH_LACI_1"/>
    <property type="match status" value="1"/>
</dbReference>
<dbReference type="PROSITE" id="PS50932">
    <property type="entry name" value="HTH_LACI_2"/>
    <property type="match status" value="1"/>
</dbReference>
<sequence>MATIKDVAKMAGVSTTTVSHVINKTRFVAKDTEEAVLSAIKQLNYSPSAVARSLKVNTTKSIGMIVTTSEAPYFAEIIHSVEEHCYRQGYSLFLCNTQNDPEKVKNHLEMLAKKRVDGLLVMCSEYTQDSLDLLSSFSTIPMVVMDWGPNANTDVIDDHSFDGGYLATKHLIECGHKKIGIICGELNKTTARTRYEGFEKAMEEAKLTINPSWVLEGAFEPEDGYECMNRLLTQEELPTALFCCNDVMALGAISALTEKGLRVPEDMSIIGYDDIHASRFYAPPLTTIHQSKLRLGRQAVNILLERITHKDEGVQQYSRIDITPELIIRKSVKSIL</sequence>
<organism>
    <name type="scientific">Haemophilus influenzae (strain PittEE)</name>
    <dbReference type="NCBI Taxonomy" id="374930"/>
    <lineage>
        <taxon>Bacteria</taxon>
        <taxon>Pseudomonadati</taxon>
        <taxon>Pseudomonadota</taxon>
        <taxon>Gammaproteobacteria</taxon>
        <taxon>Pasteurellales</taxon>
        <taxon>Pasteurellaceae</taxon>
        <taxon>Haemophilus</taxon>
    </lineage>
</organism>
<accession>A5UCM9</accession>
<comment type="function">
    <text evidence="1">Is the main repressor of the genes involved in the de novo synthesis of purine nucleotides, regulating purB, purC, purEK, purF, purHD, purL, purMN and guaBA expression. PurR is allosterically activated to bind its cognate DNA by binding the purine corepressors, hypoxanthine or guanine, thereby effecting transcription repression.</text>
</comment>
<comment type="pathway">
    <text>Purine metabolism; purine nucleotide biosynthesis [regulation].</text>
</comment>
<comment type="subunit">
    <text evidence="1">Homodimer.</text>
</comment>
<comment type="domain">
    <text evidence="1">Consists of two structural and functional domains: an N-terminal DNA-binding domain, approximately the first 60 residues, and a larger C-terminal domain, approximately 280 residues, which imparts the function of corepressor binding and oligomerization.</text>
</comment>
<keyword id="KW-0238">DNA-binding</keyword>
<keyword id="KW-0658">Purine biosynthesis</keyword>
<keyword id="KW-0678">Repressor</keyword>
<keyword id="KW-0804">Transcription</keyword>
<keyword id="KW-0805">Transcription regulation</keyword>
<reference key="1">
    <citation type="journal article" date="2007" name="Genome Biol.">
        <title>Characterization and modeling of the Haemophilus influenzae core and supragenomes based on the complete genomic sequences of Rd and 12 clinical nontypeable strains.</title>
        <authorList>
            <person name="Hogg J.S."/>
            <person name="Hu F.Z."/>
            <person name="Janto B."/>
            <person name="Boissy R."/>
            <person name="Hayes J."/>
            <person name="Keefe R."/>
            <person name="Post J.C."/>
            <person name="Ehrlich G.D."/>
        </authorList>
    </citation>
    <scope>NUCLEOTIDE SEQUENCE [LARGE SCALE GENOMIC DNA]</scope>
    <source>
        <strain>PittEE</strain>
    </source>
</reference>
<gene>
    <name evidence="1" type="primary">purR</name>
    <name type="ordered locus">CGSHiEE_05845</name>
</gene>
<proteinExistence type="inferred from homology"/>
<evidence type="ECO:0000255" key="1">
    <source>
        <dbReference type="HAMAP-Rule" id="MF_01277"/>
    </source>
</evidence>
<protein>
    <recommendedName>
        <fullName evidence="1">HTH-type transcriptional repressor PurR</fullName>
    </recommendedName>
    <alternativeName>
        <fullName evidence="1">Pur regulon repressor</fullName>
    </alternativeName>
    <alternativeName>
        <fullName evidence="1">Purine nucleotide synthesis repressor</fullName>
    </alternativeName>
</protein>
<name>PURR_HAEIE</name>